<reference key="1">
    <citation type="journal article" date="2000" name="Nature">
        <title>The genome sequence of the plant pathogen Xylella fastidiosa.</title>
        <authorList>
            <person name="Simpson A.J.G."/>
            <person name="Reinach F.C."/>
            <person name="Arruda P."/>
            <person name="Abreu F.A."/>
            <person name="Acencio M."/>
            <person name="Alvarenga R."/>
            <person name="Alves L.M.C."/>
            <person name="Araya J.E."/>
            <person name="Baia G.S."/>
            <person name="Baptista C.S."/>
            <person name="Barros M.H."/>
            <person name="Bonaccorsi E.D."/>
            <person name="Bordin S."/>
            <person name="Bove J.M."/>
            <person name="Briones M.R.S."/>
            <person name="Bueno M.R.P."/>
            <person name="Camargo A.A."/>
            <person name="Camargo L.E.A."/>
            <person name="Carraro D.M."/>
            <person name="Carrer H."/>
            <person name="Colauto N.B."/>
            <person name="Colombo C."/>
            <person name="Costa F.F."/>
            <person name="Costa M.C.R."/>
            <person name="Costa-Neto C.M."/>
            <person name="Coutinho L.L."/>
            <person name="Cristofani M."/>
            <person name="Dias-Neto E."/>
            <person name="Docena C."/>
            <person name="El-Dorry H."/>
            <person name="Facincani A.P."/>
            <person name="Ferreira A.J.S."/>
            <person name="Ferreira V.C.A."/>
            <person name="Ferro J.A."/>
            <person name="Fraga J.S."/>
            <person name="Franca S.C."/>
            <person name="Franco M.C."/>
            <person name="Frohme M."/>
            <person name="Furlan L.R."/>
            <person name="Garnier M."/>
            <person name="Goldman G.H."/>
            <person name="Goldman M.H.S."/>
            <person name="Gomes S.L."/>
            <person name="Gruber A."/>
            <person name="Ho P.L."/>
            <person name="Hoheisel J.D."/>
            <person name="Junqueira M.L."/>
            <person name="Kemper E.L."/>
            <person name="Kitajima J.P."/>
            <person name="Krieger J.E."/>
            <person name="Kuramae E.E."/>
            <person name="Laigret F."/>
            <person name="Lambais M.R."/>
            <person name="Leite L.C.C."/>
            <person name="Lemos E.G.M."/>
            <person name="Lemos M.V.F."/>
            <person name="Lopes S.A."/>
            <person name="Lopes C.R."/>
            <person name="Machado J.A."/>
            <person name="Machado M.A."/>
            <person name="Madeira A.M.B.N."/>
            <person name="Madeira H.M.F."/>
            <person name="Marino C.L."/>
            <person name="Marques M.V."/>
            <person name="Martins E.A.L."/>
            <person name="Martins E.M.F."/>
            <person name="Matsukuma A.Y."/>
            <person name="Menck C.F.M."/>
            <person name="Miracca E.C."/>
            <person name="Miyaki C.Y."/>
            <person name="Monteiro-Vitorello C.B."/>
            <person name="Moon D.H."/>
            <person name="Nagai M.A."/>
            <person name="Nascimento A.L.T.O."/>
            <person name="Netto L.E.S."/>
            <person name="Nhani A. Jr."/>
            <person name="Nobrega F.G."/>
            <person name="Nunes L.R."/>
            <person name="Oliveira M.A."/>
            <person name="de Oliveira M.C."/>
            <person name="de Oliveira R.C."/>
            <person name="Palmieri D.A."/>
            <person name="Paris A."/>
            <person name="Peixoto B.R."/>
            <person name="Pereira G.A.G."/>
            <person name="Pereira H.A. Jr."/>
            <person name="Pesquero J.B."/>
            <person name="Quaggio R.B."/>
            <person name="Roberto P.G."/>
            <person name="Rodrigues V."/>
            <person name="de Rosa A.J.M."/>
            <person name="de Rosa V.E. Jr."/>
            <person name="de Sa R.G."/>
            <person name="Santelli R.V."/>
            <person name="Sawasaki H.E."/>
            <person name="da Silva A.C.R."/>
            <person name="da Silva A.M."/>
            <person name="da Silva F.R."/>
            <person name="Silva W.A. Jr."/>
            <person name="da Silveira J.F."/>
            <person name="Silvestri M.L.Z."/>
            <person name="Siqueira W.J."/>
            <person name="de Souza A.A."/>
            <person name="de Souza A.P."/>
            <person name="Terenzi M.F."/>
            <person name="Truffi D."/>
            <person name="Tsai S.M."/>
            <person name="Tsuhako M.H."/>
            <person name="Vallada H."/>
            <person name="Van Sluys M.A."/>
            <person name="Verjovski-Almeida S."/>
            <person name="Vettore A.L."/>
            <person name="Zago M.A."/>
            <person name="Zatz M."/>
            <person name="Meidanis J."/>
            <person name="Setubal J.C."/>
        </authorList>
    </citation>
    <scope>NUCLEOTIDE SEQUENCE [LARGE SCALE GENOMIC DNA]</scope>
    <source>
        <strain>9a5c</strain>
    </source>
</reference>
<reference key="2">
    <citation type="journal article" date="2007" name="J. Bacteriol.">
        <title>BigR, a transcriptional repressor from plant-associated bacteria, regulates an operon implicated in biofilm growth.</title>
        <authorList>
            <person name="Barbosa R.L."/>
            <person name="Benedetti C.E."/>
        </authorList>
    </citation>
    <scope>REPRESSION BY BIGR</scope>
    <source>
        <strain>9a5c</strain>
    </source>
</reference>
<gene>
    <name type="ordered locus">XF_0764</name>
</gene>
<feature type="chain" id="PRO_0000305341" description="Probable membrane transporter protein XF_0764">
    <location>
        <begin position="1"/>
        <end position="261"/>
    </location>
</feature>
<feature type="transmembrane region" description="Helical" evidence="1">
    <location>
        <begin position="6"/>
        <end position="26"/>
    </location>
</feature>
<feature type="transmembrane region" description="Helical" evidence="1">
    <location>
        <begin position="29"/>
        <end position="49"/>
    </location>
</feature>
<feature type="transmembrane region" description="Helical" evidence="1">
    <location>
        <begin position="78"/>
        <end position="98"/>
    </location>
</feature>
<feature type="transmembrane region" description="Helical" evidence="1">
    <location>
        <begin position="99"/>
        <end position="119"/>
    </location>
</feature>
<feature type="transmembrane region" description="Helical" evidence="1">
    <location>
        <begin position="150"/>
        <end position="170"/>
    </location>
</feature>
<feature type="transmembrane region" description="Helical" evidence="1">
    <location>
        <begin position="175"/>
        <end position="195"/>
    </location>
</feature>
<feature type="transmembrane region" description="Helical" evidence="1">
    <location>
        <begin position="205"/>
        <end position="225"/>
    </location>
</feature>
<feature type="transmembrane region" description="Helical" evidence="1">
    <location>
        <begin position="239"/>
        <end position="259"/>
    </location>
</feature>
<sequence>MTIQSLIVTIGSGGLVGFALGLLGGGGSILATPLLLYVVGVTNPHIAIGTSAVAVSANAYANLIAHAWKGHVWWRSAVIFALVGTLGAFLGSSIGMLIDGQRLLLLFGLLMAMVGLLMLRGRATAPHAEQHQTVLRMCMKTSAVAILTGAASGFFGIGGGFLIVPALIFATRMPTINAIGSSLLAVGTFGLITTLNYARHDLVDWTIAMEFIVGGITGGGLGTLLATRFSASKHLLNRVFGLIVIAVAIYVIWRSWASLVA</sequence>
<dbReference type="EMBL" id="AE003849">
    <property type="protein sequence ID" value="AAF83574.1"/>
    <property type="status" value="ALT_INIT"/>
    <property type="molecule type" value="Genomic_DNA"/>
</dbReference>
<dbReference type="PIR" id="A82766">
    <property type="entry name" value="A82766"/>
</dbReference>
<dbReference type="RefSeq" id="WP_031338049.1">
    <property type="nucleotide sequence ID" value="NC_002488.3"/>
</dbReference>
<dbReference type="STRING" id="160492.XF_0764"/>
<dbReference type="KEGG" id="xfa:XF_0764"/>
<dbReference type="eggNOG" id="COG0730">
    <property type="taxonomic scope" value="Bacteria"/>
</dbReference>
<dbReference type="HOGENOM" id="CLU_045498_5_0_6"/>
<dbReference type="Proteomes" id="UP000000812">
    <property type="component" value="Chromosome"/>
</dbReference>
<dbReference type="GO" id="GO:0005886">
    <property type="term" value="C:plasma membrane"/>
    <property type="evidence" value="ECO:0007669"/>
    <property type="project" value="UniProtKB-SubCell"/>
</dbReference>
<dbReference type="InterPro" id="IPR002781">
    <property type="entry name" value="TM_pro_TauE-like"/>
</dbReference>
<dbReference type="InterPro" id="IPR051598">
    <property type="entry name" value="TSUP/Inactive_protease-like"/>
</dbReference>
<dbReference type="PANTHER" id="PTHR43701">
    <property type="entry name" value="MEMBRANE TRANSPORTER PROTEIN MJ0441-RELATED"/>
    <property type="match status" value="1"/>
</dbReference>
<dbReference type="PANTHER" id="PTHR43701:SF2">
    <property type="entry name" value="MEMBRANE TRANSPORTER PROTEIN YJNA-RELATED"/>
    <property type="match status" value="1"/>
</dbReference>
<dbReference type="Pfam" id="PF01925">
    <property type="entry name" value="TauE"/>
    <property type="match status" value="1"/>
</dbReference>
<proteinExistence type="evidence at transcript level"/>
<evidence type="ECO:0000255" key="1"/>
<evidence type="ECO:0000269" key="2">
    <source>
    </source>
</evidence>
<evidence type="ECO:0000305" key="3"/>
<accession>Q9PFB4</accession>
<comment type="subcellular location">
    <subcellularLocation>
        <location evidence="3">Cell membrane</location>
        <topology evidence="3">Multi-pass membrane protein</topology>
    </subcellularLocation>
</comment>
<comment type="induction">
    <text evidence="2">Repressed by BigR.</text>
</comment>
<comment type="miscellaneous">
    <text>Part of an operon that comprises bigR, blh, XF_0765 and XF_0766.</text>
</comment>
<comment type="similarity">
    <text evidence="3">Belongs to the 4-toluene sulfonate uptake permease (TSUP) (TC 2.A.102) family.</text>
</comment>
<comment type="sequence caution" evidence="3">
    <conflict type="erroneous initiation">
        <sequence resource="EMBL-CDS" id="AAF83574"/>
    </conflict>
</comment>
<name>Y764_XYLFA</name>
<organism>
    <name type="scientific">Xylella fastidiosa (strain 9a5c)</name>
    <dbReference type="NCBI Taxonomy" id="160492"/>
    <lineage>
        <taxon>Bacteria</taxon>
        <taxon>Pseudomonadati</taxon>
        <taxon>Pseudomonadota</taxon>
        <taxon>Gammaproteobacteria</taxon>
        <taxon>Lysobacterales</taxon>
        <taxon>Lysobacteraceae</taxon>
        <taxon>Xylella</taxon>
    </lineage>
</organism>
<keyword id="KW-1003">Cell membrane</keyword>
<keyword id="KW-0472">Membrane</keyword>
<keyword id="KW-0812">Transmembrane</keyword>
<keyword id="KW-1133">Transmembrane helix</keyword>
<keyword id="KW-0813">Transport</keyword>
<protein>
    <recommendedName>
        <fullName>Probable membrane transporter protein XF_0764</fullName>
    </recommendedName>
</protein>